<organism>
    <name type="scientific">Nitrosococcus oceani (strain ATCC 19707 / BCRC 17464 / JCM 30415 / NCIMB 11848 / C-107)</name>
    <dbReference type="NCBI Taxonomy" id="323261"/>
    <lineage>
        <taxon>Bacteria</taxon>
        <taxon>Pseudomonadati</taxon>
        <taxon>Pseudomonadota</taxon>
        <taxon>Gammaproteobacteria</taxon>
        <taxon>Chromatiales</taxon>
        <taxon>Chromatiaceae</taxon>
        <taxon>Nitrosococcus</taxon>
    </lineage>
</organism>
<evidence type="ECO:0000255" key="1">
    <source>
        <dbReference type="HAMAP-Rule" id="MF_00113"/>
    </source>
</evidence>
<keyword id="KW-0963">Cytoplasm</keyword>
<keyword id="KW-0671">Queuosine biosynthesis</keyword>
<keyword id="KW-1185">Reference proteome</keyword>
<keyword id="KW-0949">S-adenosyl-L-methionine</keyword>
<keyword id="KW-0808">Transferase</keyword>
<protein>
    <recommendedName>
        <fullName evidence="1">S-adenosylmethionine:tRNA ribosyltransferase-isomerase</fullName>
        <ecNumber evidence="1">2.4.99.17</ecNumber>
    </recommendedName>
    <alternativeName>
        <fullName evidence="1">Queuosine biosynthesis protein QueA</fullName>
    </alternativeName>
</protein>
<gene>
    <name evidence="1" type="primary">queA</name>
    <name type="ordered locus">Noc_1645</name>
</gene>
<comment type="function">
    <text evidence="1">Transfers and isomerizes the ribose moiety from AdoMet to the 7-aminomethyl group of 7-deazaguanine (preQ1-tRNA) to give epoxyqueuosine (oQ-tRNA).</text>
</comment>
<comment type="catalytic activity">
    <reaction evidence="1">
        <text>7-aminomethyl-7-carbaguanosine(34) in tRNA + S-adenosyl-L-methionine = epoxyqueuosine(34) in tRNA + adenine + L-methionine + 2 H(+)</text>
        <dbReference type="Rhea" id="RHEA:32155"/>
        <dbReference type="Rhea" id="RHEA-COMP:10342"/>
        <dbReference type="Rhea" id="RHEA-COMP:18582"/>
        <dbReference type="ChEBI" id="CHEBI:15378"/>
        <dbReference type="ChEBI" id="CHEBI:16708"/>
        <dbReference type="ChEBI" id="CHEBI:57844"/>
        <dbReference type="ChEBI" id="CHEBI:59789"/>
        <dbReference type="ChEBI" id="CHEBI:82833"/>
        <dbReference type="ChEBI" id="CHEBI:194443"/>
        <dbReference type="EC" id="2.4.99.17"/>
    </reaction>
</comment>
<comment type="pathway">
    <text evidence="1">tRNA modification; tRNA-queuosine biosynthesis.</text>
</comment>
<comment type="subunit">
    <text evidence="1">Monomer.</text>
</comment>
<comment type="subcellular location">
    <subcellularLocation>
        <location evidence="1">Cytoplasm</location>
    </subcellularLocation>
</comment>
<comment type="similarity">
    <text evidence="1">Belongs to the QueA family.</text>
</comment>
<sequence>MQLSDFTYNLPKQLIAQYPPKRRGESRLLSLEGASGIVKDRQFIELPELLSTKDLLIFNNTKVIPARIQGTKDSGGKIEILIERFLDQHRALAHIRANNPPRAGRRLVMEQSVEVEVKGRVKELFELRFLDPRPLPQLLEAIGQMPLPPYIQRKTVPVDKERYQTIYASRPGAVAAPTAGLHFDKPLLKRLQAQGIRSGYITLHVGAGTFQPVRVKNITQHQMHSEYVEVSEQICAQIRDTQQAGGRVVAVGTTTVRALEAASAKGVIAPYQGETEIFIFPGHRFHTVNALITNFHLPETTLLMLVCAFAGSEHVLAAYRHAIKKGYRFFSYGDAMFITEAKTG</sequence>
<dbReference type="EC" id="2.4.99.17" evidence="1"/>
<dbReference type="EMBL" id="CP000127">
    <property type="protein sequence ID" value="ABA58117.1"/>
    <property type="molecule type" value="Genomic_DNA"/>
</dbReference>
<dbReference type="RefSeq" id="WP_002811324.1">
    <property type="nucleotide sequence ID" value="NC_007484.1"/>
</dbReference>
<dbReference type="SMR" id="Q3JAM9"/>
<dbReference type="FunCoup" id="Q3JAM9">
    <property type="interactions" value="431"/>
</dbReference>
<dbReference type="STRING" id="323261.Noc_1645"/>
<dbReference type="KEGG" id="noc:Noc_1645"/>
<dbReference type="eggNOG" id="COG0809">
    <property type="taxonomic scope" value="Bacteria"/>
</dbReference>
<dbReference type="HOGENOM" id="CLU_039110_1_0_6"/>
<dbReference type="InParanoid" id="Q3JAM9"/>
<dbReference type="UniPathway" id="UPA00392"/>
<dbReference type="Proteomes" id="UP000006838">
    <property type="component" value="Chromosome"/>
</dbReference>
<dbReference type="GO" id="GO:0005737">
    <property type="term" value="C:cytoplasm"/>
    <property type="evidence" value="ECO:0007669"/>
    <property type="project" value="UniProtKB-SubCell"/>
</dbReference>
<dbReference type="GO" id="GO:0051075">
    <property type="term" value="F:S-adenosylmethionine:tRNA ribosyltransferase-isomerase activity"/>
    <property type="evidence" value="ECO:0007669"/>
    <property type="project" value="UniProtKB-EC"/>
</dbReference>
<dbReference type="GO" id="GO:0008616">
    <property type="term" value="P:queuosine biosynthetic process"/>
    <property type="evidence" value="ECO:0007669"/>
    <property type="project" value="UniProtKB-UniRule"/>
</dbReference>
<dbReference type="GO" id="GO:0002099">
    <property type="term" value="P:tRNA wobble guanine modification"/>
    <property type="evidence" value="ECO:0007669"/>
    <property type="project" value="TreeGrafter"/>
</dbReference>
<dbReference type="FunFam" id="3.40.1780.10:FF:000001">
    <property type="entry name" value="S-adenosylmethionine:tRNA ribosyltransferase-isomerase"/>
    <property type="match status" value="1"/>
</dbReference>
<dbReference type="Gene3D" id="2.40.10.240">
    <property type="entry name" value="QueA-like"/>
    <property type="match status" value="1"/>
</dbReference>
<dbReference type="Gene3D" id="3.40.1780.10">
    <property type="entry name" value="QueA-like"/>
    <property type="match status" value="1"/>
</dbReference>
<dbReference type="HAMAP" id="MF_00113">
    <property type="entry name" value="QueA"/>
    <property type="match status" value="1"/>
</dbReference>
<dbReference type="InterPro" id="IPR003699">
    <property type="entry name" value="QueA"/>
</dbReference>
<dbReference type="InterPro" id="IPR042118">
    <property type="entry name" value="QueA_dom1"/>
</dbReference>
<dbReference type="InterPro" id="IPR042119">
    <property type="entry name" value="QueA_dom2"/>
</dbReference>
<dbReference type="InterPro" id="IPR036100">
    <property type="entry name" value="QueA_sf"/>
</dbReference>
<dbReference type="NCBIfam" id="NF001140">
    <property type="entry name" value="PRK00147.1"/>
    <property type="match status" value="1"/>
</dbReference>
<dbReference type="NCBIfam" id="TIGR00113">
    <property type="entry name" value="queA"/>
    <property type="match status" value="1"/>
</dbReference>
<dbReference type="PANTHER" id="PTHR30307">
    <property type="entry name" value="S-ADENOSYLMETHIONINE:TRNA RIBOSYLTRANSFERASE-ISOMERASE"/>
    <property type="match status" value="1"/>
</dbReference>
<dbReference type="PANTHER" id="PTHR30307:SF0">
    <property type="entry name" value="S-ADENOSYLMETHIONINE:TRNA RIBOSYLTRANSFERASE-ISOMERASE"/>
    <property type="match status" value="1"/>
</dbReference>
<dbReference type="Pfam" id="PF02547">
    <property type="entry name" value="Queuosine_synth"/>
    <property type="match status" value="1"/>
</dbReference>
<dbReference type="SUPFAM" id="SSF111337">
    <property type="entry name" value="QueA-like"/>
    <property type="match status" value="1"/>
</dbReference>
<accession>Q3JAM9</accession>
<proteinExistence type="inferred from homology"/>
<reference key="1">
    <citation type="journal article" date="2006" name="Appl. Environ. Microbiol.">
        <title>Complete genome sequence of the marine, chemolithoautotrophic, ammonia-oxidizing bacterium Nitrosococcus oceani ATCC 19707.</title>
        <authorList>
            <person name="Klotz M.G."/>
            <person name="Arp D.J."/>
            <person name="Chain P.S.G."/>
            <person name="El-Sheikh A.F."/>
            <person name="Hauser L.J."/>
            <person name="Hommes N.G."/>
            <person name="Larimer F.W."/>
            <person name="Malfatti S.A."/>
            <person name="Norton J.M."/>
            <person name="Poret-Peterson A.T."/>
            <person name="Vergez L.M."/>
            <person name="Ward B.B."/>
        </authorList>
    </citation>
    <scope>NUCLEOTIDE SEQUENCE [LARGE SCALE GENOMIC DNA]</scope>
    <source>
        <strain>ATCC 19707 / BCRC 17464 / JCM 30415 / NCIMB 11848 / C-107</strain>
    </source>
</reference>
<feature type="chain" id="PRO_0000231352" description="S-adenosylmethionine:tRNA ribosyltransferase-isomerase">
    <location>
        <begin position="1"/>
        <end position="344"/>
    </location>
</feature>
<name>QUEA_NITOC</name>